<evidence type="ECO:0000255" key="1">
    <source>
        <dbReference type="HAMAP-Rule" id="MF_00539"/>
    </source>
</evidence>
<evidence type="ECO:0000256" key="2">
    <source>
        <dbReference type="SAM" id="MobiDB-lite"/>
    </source>
</evidence>
<evidence type="ECO:0000305" key="3"/>
<keyword id="KW-0687">Ribonucleoprotein</keyword>
<keyword id="KW-0689">Ribosomal protein</keyword>
<feature type="chain" id="PRO_1000017464" description="Large ribosomal subunit protein bL27">
    <location>
        <begin position="1"/>
        <end position="84"/>
    </location>
</feature>
<feature type="region of interest" description="Disordered" evidence="2">
    <location>
        <begin position="1"/>
        <end position="25"/>
    </location>
</feature>
<protein>
    <recommendedName>
        <fullName evidence="1">Large ribosomal subunit protein bL27</fullName>
    </recommendedName>
    <alternativeName>
        <fullName evidence="3">50S ribosomal protein L27</fullName>
    </alternativeName>
</protein>
<dbReference type="EMBL" id="CP000027">
    <property type="protein sequence ID" value="AAW39459.1"/>
    <property type="molecule type" value="Genomic_DNA"/>
</dbReference>
<dbReference type="RefSeq" id="WP_010937014.1">
    <property type="nucleotide sequence ID" value="NC_002936.3"/>
</dbReference>
<dbReference type="SMR" id="Q3Z6W2"/>
<dbReference type="FunCoup" id="Q3Z6W2">
    <property type="interactions" value="310"/>
</dbReference>
<dbReference type="STRING" id="243164.DET1326"/>
<dbReference type="GeneID" id="3229419"/>
<dbReference type="KEGG" id="det:DET1326"/>
<dbReference type="eggNOG" id="COG0211">
    <property type="taxonomic scope" value="Bacteria"/>
</dbReference>
<dbReference type="HOGENOM" id="CLU_095424_4_1_0"/>
<dbReference type="InParanoid" id="Q3Z6W2"/>
<dbReference type="Proteomes" id="UP000008289">
    <property type="component" value="Chromosome"/>
</dbReference>
<dbReference type="GO" id="GO:1990904">
    <property type="term" value="C:ribonucleoprotein complex"/>
    <property type="evidence" value="ECO:0007669"/>
    <property type="project" value="UniProtKB-KW"/>
</dbReference>
<dbReference type="GO" id="GO:0005840">
    <property type="term" value="C:ribosome"/>
    <property type="evidence" value="ECO:0007669"/>
    <property type="project" value="UniProtKB-KW"/>
</dbReference>
<dbReference type="GO" id="GO:0003735">
    <property type="term" value="F:structural constituent of ribosome"/>
    <property type="evidence" value="ECO:0007669"/>
    <property type="project" value="InterPro"/>
</dbReference>
<dbReference type="GO" id="GO:0006412">
    <property type="term" value="P:translation"/>
    <property type="evidence" value="ECO:0007669"/>
    <property type="project" value="UniProtKB-UniRule"/>
</dbReference>
<dbReference type="FunFam" id="2.40.50.100:FF:000004">
    <property type="entry name" value="50S ribosomal protein L27"/>
    <property type="match status" value="1"/>
</dbReference>
<dbReference type="Gene3D" id="2.40.50.100">
    <property type="match status" value="1"/>
</dbReference>
<dbReference type="HAMAP" id="MF_00539">
    <property type="entry name" value="Ribosomal_bL27"/>
    <property type="match status" value="1"/>
</dbReference>
<dbReference type="InterPro" id="IPR001684">
    <property type="entry name" value="Ribosomal_bL27"/>
</dbReference>
<dbReference type="InterPro" id="IPR018261">
    <property type="entry name" value="Ribosomal_bL27_CS"/>
</dbReference>
<dbReference type="NCBIfam" id="TIGR00062">
    <property type="entry name" value="L27"/>
    <property type="match status" value="1"/>
</dbReference>
<dbReference type="PANTHER" id="PTHR15893:SF0">
    <property type="entry name" value="LARGE RIBOSOMAL SUBUNIT PROTEIN BL27M"/>
    <property type="match status" value="1"/>
</dbReference>
<dbReference type="PANTHER" id="PTHR15893">
    <property type="entry name" value="RIBOSOMAL PROTEIN L27"/>
    <property type="match status" value="1"/>
</dbReference>
<dbReference type="Pfam" id="PF01016">
    <property type="entry name" value="Ribosomal_L27"/>
    <property type="match status" value="1"/>
</dbReference>
<dbReference type="PRINTS" id="PR00063">
    <property type="entry name" value="RIBOSOMALL27"/>
</dbReference>
<dbReference type="SUPFAM" id="SSF110324">
    <property type="entry name" value="Ribosomal L27 protein-like"/>
    <property type="match status" value="1"/>
</dbReference>
<dbReference type="PROSITE" id="PS00831">
    <property type="entry name" value="RIBOSOMAL_L27"/>
    <property type="match status" value="1"/>
</dbReference>
<organism>
    <name type="scientific">Dehalococcoides mccartyi (strain ATCC BAA-2266 / KCTC 15142 / 195)</name>
    <name type="common">Dehalococcoides ethenogenes (strain 195)</name>
    <dbReference type="NCBI Taxonomy" id="243164"/>
    <lineage>
        <taxon>Bacteria</taxon>
        <taxon>Bacillati</taxon>
        <taxon>Chloroflexota</taxon>
        <taxon>Dehalococcoidia</taxon>
        <taxon>Dehalococcoidales</taxon>
        <taxon>Dehalococcoidaceae</taxon>
        <taxon>Dehalococcoides</taxon>
    </lineage>
</organism>
<gene>
    <name evidence="1" type="primary">rpmA</name>
    <name type="ordered locus">DET1326</name>
</gene>
<reference key="1">
    <citation type="journal article" date="2005" name="Science">
        <title>Genome sequence of the PCE-dechlorinating bacterium Dehalococcoides ethenogenes.</title>
        <authorList>
            <person name="Seshadri R."/>
            <person name="Adrian L."/>
            <person name="Fouts D.E."/>
            <person name="Eisen J.A."/>
            <person name="Phillippy A.M."/>
            <person name="Methe B.A."/>
            <person name="Ward N.L."/>
            <person name="Nelson W.C."/>
            <person name="DeBoy R.T."/>
            <person name="Khouri H.M."/>
            <person name="Kolonay J.F."/>
            <person name="Dodson R.J."/>
            <person name="Daugherty S.C."/>
            <person name="Brinkac L.M."/>
            <person name="Sullivan S.A."/>
            <person name="Madupu R."/>
            <person name="Nelson K.E."/>
            <person name="Kang K.H."/>
            <person name="Impraim M."/>
            <person name="Tran K."/>
            <person name="Robinson J.M."/>
            <person name="Forberger H.A."/>
            <person name="Fraser C.M."/>
            <person name="Zinder S.H."/>
            <person name="Heidelberg J.F."/>
        </authorList>
    </citation>
    <scope>NUCLEOTIDE SEQUENCE [LARGE SCALE GENOMIC DNA]</scope>
    <source>
        <strain>ATCC BAA-2266 / KCTC 15142 / 195</strain>
    </source>
</reference>
<accession>Q3Z6W2</accession>
<comment type="similarity">
    <text evidence="1">Belongs to the bacterial ribosomal protein bL27 family.</text>
</comment>
<name>RL27_DEHM1</name>
<proteinExistence type="inferred from homology"/>
<sequence>MAHKKGAGSTKNGRDSKPKMLGVKRFAGEKVHSGTIIVRQRGTRIHPGENVGLGRDYTIFATCEGVVKFEPTTNDRRKVSVVAD</sequence>